<evidence type="ECO:0000255" key="1">
    <source>
        <dbReference type="HAMAP-Rule" id="MF_00045"/>
    </source>
</evidence>
<feature type="chain" id="PRO_1000004266" description="Oligoribonuclease">
    <location>
        <begin position="1"/>
        <end position="215"/>
    </location>
</feature>
<feature type="domain" description="Exonuclease" evidence="1">
    <location>
        <begin position="5"/>
        <end position="170"/>
    </location>
</feature>
<feature type="active site" evidence="1">
    <location>
        <position position="127"/>
    </location>
</feature>
<gene>
    <name evidence="1" type="primary">orn</name>
    <name type="ordered locus">MUL_3790</name>
</gene>
<comment type="function">
    <text evidence="1">3'-to-5' exoribonuclease specific for small oligoribonucleotides.</text>
</comment>
<comment type="subcellular location">
    <subcellularLocation>
        <location evidence="1">Cytoplasm</location>
    </subcellularLocation>
</comment>
<comment type="similarity">
    <text evidence="1">Belongs to the oligoribonuclease family.</text>
</comment>
<keyword id="KW-0963">Cytoplasm</keyword>
<keyword id="KW-0269">Exonuclease</keyword>
<keyword id="KW-0378">Hydrolase</keyword>
<keyword id="KW-0540">Nuclease</keyword>
<accession>A0PU74</accession>
<organism>
    <name type="scientific">Mycobacterium ulcerans (strain Agy99)</name>
    <dbReference type="NCBI Taxonomy" id="362242"/>
    <lineage>
        <taxon>Bacteria</taxon>
        <taxon>Bacillati</taxon>
        <taxon>Actinomycetota</taxon>
        <taxon>Actinomycetes</taxon>
        <taxon>Mycobacteriales</taxon>
        <taxon>Mycobacteriaceae</taxon>
        <taxon>Mycobacterium</taxon>
        <taxon>Mycobacterium ulcerans group</taxon>
    </lineage>
</organism>
<protein>
    <recommendedName>
        <fullName evidence="1">Oligoribonuclease</fullName>
        <ecNumber evidence="1">3.1.15.-</ecNumber>
    </recommendedName>
</protein>
<name>ORN_MYCUA</name>
<reference key="1">
    <citation type="journal article" date="2007" name="Genome Res.">
        <title>Reductive evolution and niche adaptation inferred from the genome of Mycobacterium ulcerans, the causative agent of Buruli ulcer.</title>
        <authorList>
            <person name="Stinear T.P."/>
            <person name="Seemann T."/>
            <person name="Pidot S."/>
            <person name="Frigui W."/>
            <person name="Reysset G."/>
            <person name="Garnier T."/>
            <person name="Meurice G."/>
            <person name="Simon D."/>
            <person name="Bouchier C."/>
            <person name="Ma L."/>
            <person name="Tichit M."/>
            <person name="Porter J.L."/>
            <person name="Ryan J."/>
            <person name="Johnson P.D.R."/>
            <person name="Davies J.K."/>
            <person name="Jenkin G.A."/>
            <person name="Small P.L.C."/>
            <person name="Jones L.M."/>
            <person name="Tekaia F."/>
            <person name="Laval F."/>
            <person name="Daffe M."/>
            <person name="Parkhill J."/>
            <person name="Cole S.T."/>
        </authorList>
    </citation>
    <scope>NUCLEOTIDE SEQUENCE [LARGE SCALE GENOMIC DNA]</scope>
    <source>
        <strain>Agy99</strain>
    </source>
</reference>
<sequence length="215" mass="23551">MREELVWIDCEMTGLDLGPDKLIEIAALVTDADLNILGDGVDVVIHADDAALSSMVDVVADMHSRSGLTEEVRASTVDMATAEAMVLDYIGEHVKQPKTAPLAGNSIATDRSFIARDMPALDAFLHYRMIDVSSIKELCRRWYPRIYFGQPPKGLAHRALADIHESIRELQYYRRTAFVPQPGPTTSEITAVVADLQGVDDAPEATDSAQERPSG</sequence>
<dbReference type="EC" id="3.1.15.-" evidence="1"/>
<dbReference type="EMBL" id="CP000325">
    <property type="protein sequence ID" value="ABL05893.1"/>
    <property type="molecule type" value="Genomic_DNA"/>
</dbReference>
<dbReference type="RefSeq" id="WP_011741498.1">
    <property type="nucleotide sequence ID" value="NC_008611.1"/>
</dbReference>
<dbReference type="SMR" id="A0PU74"/>
<dbReference type="KEGG" id="mul:MUL_3790"/>
<dbReference type="eggNOG" id="COG1949">
    <property type="taxonomic scope" value="Bacteria"/>
</dbReference>
<dbReference type="HOGENOM" id="CLU_064761_3_0_11"/>
<dbReference type="Proteomes" id="UP000000765">
    <property type="component" value="Chromosome"/>
</dbReference>
<dbReference type="GO" id="GO:0005737">
    <property type="term" value="C:cytoplasm"/>
    <property type="evidence" value="ECO:0007669"/>
    <property type="project" value="UniProtKB-SubCell"/>
</dbReference>
<dbReference type="GO" id="GO:0000175">
    <property type="term" value="F:3'-5'-RNA exonuclease activity"/>
    <property type="evidence" value="ECO:0007669"/>
    <property type="project" value="InterPro"/>
</dbReference>
<dbReference type="GO" id="GO:0003676">
    <property type="term" value="F:nucleic acid binding"/>
    <property type="evidence" value="ECO:0007669"/>
    <property type="project" value="InterPro"/>
</dbReference>
<dbReference type="CDD" id="cd06135">
    <property type="entry name" value="Orn"/>
    <property type="match status" value="1"/>
</dbReference>
<dbReference type="FunFam" id="3.30.420.10:FF:000003">
    <property type="entry name" value="Oligoribonuclease"/>
    <property type="match status" value="1"/>
</dbReference>
<dbReference type="Gene3D" id="3.30.420.10">
    <property type="entry name" value="Ribonuclease H-like superfamily/Ribonuclease H"/>
    <property type="match status" value="1"/>
</dbReference>
<dbReference type="HAMAP" id="MF_00045">
    <property type="entry name" value="Oligoribonuclease"/>
    <property type="match status" value="1"/>
</dbReference>
<dbReference type="InterPro" id="IPR013520">
    <property type="entry name" value="Exonuclease_RNaseT/DNA_pol3"/>
</dbReference>
<dbReference type="InterPro" id="IPR022894">
    <property type="entry name" value="Oligoribonuclease"/>
</dbReference>
<dbReference type="InterPro" id="IPR012337">
    <property type="entry name" value="RNaseH-like_sf"/>
</dbReference>
<dbReference type="InterPro" id="IPR036397">
    <property type="entry name" value="RNaseH_sf"/>
</dbReference>
<dbReference type="NCBIfam" id="NF003765">
    <property type="entry name" value="PRK05359.1"/>
    <property type="match status" value="1"/>
</dbReference>
<dbReference type="PANTHER" id="PTHR11046">
    <property type="entry name" value="OLIGORIBONUCLEASE, MITOCHONDRIAL"/>
    <property type="match status" value="1"/>
</dbReference>
<dbReference type="PANTHER" id="PTHR11046:SF0">
    <property type="entry name" value="OLIGORIBONUCLEASE, MITOCHONDRIAL"/>
    <property type="match status" value="1"/>
</dbReference>
<dbReference type="Pfam" id="PF00929">
    <property type="entry name" value="RNase_T"/>
    <property type="match status" value="1"/>
</dbReference>
<dbReference type="SMART" id="SM00479">
    <property type="entry name" value="EXOIII"/>
    <property type="match status" value="1"/>
</dbReference>
<dbReference type="SUPFAM" id="SSF53098">
    <property type="entry name" value="Ribonuclease H-like"/>
    <property type="match status" value="1"/>
</dbReference>
<proteinExistence type="inferred from homology"/>